<organism>
    <name type="scientific">Oryza sativa subsp. japonica</name>
    <name type="common">Rice</name>
    <dbReference type="NCBI Taxonomy" id="39947"/>
    <lineage>
        <taxon>Eukaryota</taxon>
        <taxon>Viridiplantae</taxon>
        <taxon>Streptophyta</taxon>
        <taxon>Embryophyta</taxon>
        <taxon>Tracheophyta</taxon>
        <taxon>Spermatophyta</taxon>
        <taxon>Magnoliopsida</taxon>
        <taxon>Liliopsida</taxon>
        <taxon>Poales</taxon>
        <taxon>Poaceae</taxon>
        <taxon>BOP clade</taxon>
        <taxon>Oryzoideae</taxon>
        <taxon>Oryzeae</taxon>
        <taxon>Oryzinae</taxon>
        <taxon>Oryza</taxon>
        <taxon>Oryza sativa</taxon>
    </lineage>
</organism>
<gene>
    <name evidence="7" type="primary">NFYC6</name>
    <name evidence="5" type="synonym">HAP5D</name>
    <name evidence="10" type="ordered locus">Os08g0496500</name>
    <name evidence="7" type="ordered locus">LOC_Os08g38780</name>
    <name evidence="9" type="ORF">B1142B04.32</name>
    <name evidence="8" type="ORF">P0026F07.3</name>
</gene>
<keyword id="KW-0002">3D-structure</keyword>
<keyword id="KW-0963">Cytoplasm</keyword>
<keyword id="KW-0238">DNA-binding</keyword>
<keyword id="KW-0539">Nucleus</keyword>
<keyword id="KW-1185">Reference proteome</keyword>
<keyword id="KW-0804">Transcription</keyword>
<keyword id="KW-0805">Transcription regulation</keyword>
<dbReference type="EMBL" id="AB288044">
    <property type="protein sequence ID" value="BAF64452.1"/>
    <property type="molecule type" value="Genomic_DNA"/>
</dbReference>
<dbReference type="EMBL" id="AP000364">
    <property type="protein sequence ID" value="BAA81759.1"/>
    <property type="molecule type" value="Genomic_DNA"/>
</dbReference>
<dbReference type="EMBL" id="AP005148">
    <property type="protein sequence ID" value="BAD10129.1"/>
    <property type="molecule type" value="Genomic_DNA"/>
</dbReference>
<dbReference type="EMBL" id="AP008214">
    <property type="protein sequence ID" value="BAF24050.1"/>
    <property type="molecule type" value="Genomic_DNA"/>
</dbReference>
<dbReference type="EMBL" id="AP014964">
    <property type="protein sequence ID" value="BAT06066.1"/>
    <property type="molecule type" value="Genomic_DNA"/>
</dbReference>
<dbReference type="EMBL" id="AK108510">
    <property type="protein sequence ID" value="BAG98424.1"/>
    <property type="molecule type" value="mRNA"/>
</dbReference>
<dbReference type="RefSeq" id="XP_015648381.1">
    <property type="nucleotide sequence ID" value="XM_015792895.1"/>
</dbReference>
<dbReference type="PDB" id="6R0L">
    <property type="method" value="X-ray"/>
    <property type="resolution" value="2.70 A"/>
    <property type="chains" value="B=92-168"/>
</dbReference>
<dbReference type="PDBsum" id="6R0L"/>
<dbReference type="SMR" id="Q9XE33"/>
<dbReference type="FunCoup" id="Q9XE33">
    <property type="interactions" value="836"/>
</dbReference>
<dbReference type="STRING" id="39947.Q9XE33"/>
<dbReference type="PaxDb" id="39947-Q9XE33"/>
<dbReference type="EnsemblPlants" id="Os08t0496500-01">
    <property type="protein sequence ID" value="Os08t0496500-01"/>
    <property type="gene ID" value="Os08g0496500"/>
</dbReference>
<dbReference type="Gramene" id="Os08t0496500-01">
    <property type="protein sequence ID" value="Os08t0496500-01"/>
    <property type="gene ID" value="Os08g0496500"/>
</dbReference>
<dbReference type="KEGG" id="dosa:Os08g0496500"/>
<dbReference type="eggNOG" id="KOG1657">
    <property type="taxonomic scope" value="Eukaryota"/>
</dbReference>
<dbReference type="HOGENOM" id="CLU_045277_5_4_1"/>
<dbReference type="InParanoid" id="Q9XE33"/>
<dbReference type="OMA" id="LQIFWNE"/>
<dbReference type="OrthoDB" id="1272441at2759"/>
<dbReference type="Proteomes" id="UP000000763">
    <property type="component" value="Chromosome 8"/>
</dbReference>
<dbReference type="Proteomes" id="UP000059680">
    <property type="component" value="Chromosome 8"/>
</dbReference>
<dbReference type="GO" id="GO:0005737">
    <property type="term" value="C:cytoplasm"/>
    <property type="evidence" value="ECO:0000314"/>
    <property type="project" value="UniProtKB"/>
</dbReference>
<dbReference type="GO" id="GO:0005634">
    <property type="term" value="C:nucleus"/>
    <property type="evidence" value="ECO:0000314"/>
    <property type="project" value="UniProtKB"/>
</dbReference>
<dbReference type="GO" id="GO:0003677">
    <property type="term" value="F:DNA binding"/>
    <property type="evidence" value="ECO:0007669"/>
    <property type="project" value="UniProtKB-KW"/>
</dbReference>
<dbReference type="GO" id="GO:0000981">
    <property type="term" value="F:DNA-binding transcription factor activity, RNA polymerase II-specific"/>
    <property type="evidence" value="ECO:0000318"/>
    <property type="project" value="GO_Central"/>
</dbReference>
<dbReference type="GO" id="GO:0046982">
    <property type="term" value="F:protein heterodimerization activity"/>
    <property type="evidence" value="ECO:0007669"/>
    <property type="project" value="InterPro"/>
</dbReference>
<dbReference type="GO" id="GO:0006357">
    <property type="term" value="P:regulation of transcription by RNA polymerase II"/>
    <property type="evidence" value="ECO:0000318"/>
    <property type="project" value="GO_Central"/>
</dbReference>
<dbReference type="CDD" id="cd22908">
    <property type="entry name" value="HFD_NFYC-like"/>
    <property type="match status" value="1"/>
</dbReference>
<dbReference type="FunFam" id="1.10.20.10:FF:000006">
    <property type="entry name" value="Nuclear transcription factor Y subunit gamma"/>
    <property type="match status" value="1"/>
</dbReference>
<dbReference type="Gene3D" id="1.10.20.10">
    <property type="entry name" value="Histone, subunit A"/>
    <property type="match status" value="1"/>
</dbReference>
<dbReference type="InterPro" id="IPR009072">
    <property type="entry name" value="Histone-fold"/>
</dbReference>
<dbReference type="InterPro" id="IPR007125">
    <property type="entry name" value="Histone_H2A/H2B/H3"/>
</dbReference>
<dbReference type="InterPro" id="IPR050568">
    <property type="entry name" value="Transcr_DNA_Rep_Reg"/>
</dbReference>
<dbReference type="PANTHER" id="PTHR10252">
    <property type="entry name" value="HISTONE-LIKE TRANSCRIPTION FACTOR CCAAT-RELATED"/>
    <property type="match status" value="1"/>
</dbReference>
<dbReference type="PANTHER" id="PTHR10252:SF106">
    <property type="entry name" value="NUCLEAR TRANSCRIPTION FACTOR Y SUBUNIT C-3-RELATED"/>
    <property type="match status" value="1"/>
</dbReference>
<dbReference type="Pfam" id="PF00125">
    <property type="entry name" value="Histone"/>
    <property type="match status" value="1"/>
</dbReference>
<dbReference type="SUPFAM" id="SSF47113">
    <property type="entry name" value="Histone-fold"/>
    <property type="match status" value="1"/>
</dbReference>
<feature type="chain" id="PRO_0000437436" description="Nuclear transcription factor Y subunit C-6">
    <location>
        <begin position="1"/>
        <end position="205"/>
    </location>
</feature>
<feature type="region of interest" description="Disordered" evidence="2">
    <location>
        <begin position="1"/>
        <end position="24"/>
    </location>
</feature>
<feature type="helix" evidence="11">
    <location>
        <begin position="93"/>
        <end position="102"/>
    </location>
</feature>
<feature type="strand" evidence="11">
    <location>
        <begin position="107"/>
        <end position="109"/>
    </location>
</feature>
<feature type="helix" evidence="11">
    <location>
        <begin position="112"/>
        <end position="138"/>
    </location>
</feature>
<feature type="helix" evidence="11">
    <location>
        <begin position="146"/>
        <end position="155"/>
    </location>
</feature>
<feature type="helix" evidence="11">
    <location>
        <begin position="157"/>
        <end position="162"/>
    </location>
</feature>
<feature type="turn" evidence="11">
    <location>
        <begin position="163"/>
        <end position="165"/>
    </location>
</feature>
<proteinExistence type="evidence at protein level"/>
<reference key="1">
    <citation type="journal article" date="2008" name="Mol. Genet. Genomics">
        <title>Identification, characterization and interaction of HAP family genes in rice.</title>
        <authorList>
            <person name="Thirumurugan T."/>
            <person name="Ito Y."/>
            <person name="Kubo T."/>
            <person name="Serizawa A."/>
            <person name="Kurata N."/>
        </authorList>
    </citation>
    <scope>NUCLEOTIDE SEQUENCE [GENOMIC DNA]</scope>
    <scope>INTERACTION WITH NFYB2</scope>
    <source>
        <strain>cv. Nipponbare</strain>
    </source>
</reference>
<reference key="2">
    <citation type="journal article" date="2005" name="Nature">
        <title>The map-based sequence of the rice genome.</title>
        <authorList>
            <consortium name="International rice genome sequencing project (IRGSP)"/>
        </authorList>
    </citation>
    <scope>NUCLEOTIDE SEQUENCE [LARGE SCALE GENOMIC DNA]</scope>
    <source>
        <strain>cv. Nipponbare</strain>
    </source>
</reference>
<reference key="3">
    <citation type="journal article" date="2008" name="Nucleic Acids Res.">
        <title>The rice annotation project database (RAP-DB): 2008 update.</title>
        <authorList>
            <consortium name="The rice annotation project (RAP)"/>
        </authorList>
    </citation>
    <scope>GENOME REANNOTATION</scope>
    <source>
        <strain>cv. Nipponbare</strain>
    </source>
</reference>
<reference key="4">
    <citation type="journal article" date="2013" name="Rice">
        <title>Improvement of the Oryza sativa Nipponbare reference genome using next generation sequence and optical map data.</title>
        <authorList>
            <person name="Kawahara Y."/>
            <person name="de la Bastide M."/>
            <person name="Hamilton J.P."/>
            <person name="Kanamori H."/>
            <person name="McCombie W.R."/>
            <person name="Ouyang S."/>
            <person name="Schwartz D.C."/>
            <person name="Tanaka T."/>
            <person name="Wu J."/>
            <person name="Zhou S."/>
            <person name="Childs K.L."/>
            <person name="Davidson R.M."/>
            <person name="Lin H."/>
            <person name="Quesada-Ocampo L."/>
            <person name="Vaillancourt B."/>
            <person name="Sakai H."/>
            <person name="Lee S.S."/>
            <person name="Kim J."/>
            <person name="Numa H."/>
            <person name="Itoh T."/>
            <person name="Buell C.R."/>
            <person name="Matsumoto T."/>
        </authorList>
    </citation>
    <scope>GENOME REANNOTATION</scope>
    <source>
        <strain>cv. Nipponbare</strain>
    </source>
</reference>
<reference key="5">
    <citation type="journal article" date="2003" name="Science">
        <title>Collection, mapping, and annotation of over 28,000 cDNA clones from japonica rice.</title>
        <authorList>
            <consortium name="The rice full-length cDNA consortium"/>
        </authorList>
    </citation>
    <scope>NUCLEOTIDE SEQUENCE [LARGE SCALE MRNA]</scope>
    <source>
        <strain>cv. Nipponbare</strain>
    </source>
</reference>
<reference key="6">
    <citation type="journal article" date="2016" name="Planta">
        <title>OsNF-YC2 and OsNF-YC4 proteins inhibit flowering under long-day conditions in rice.</title>
        <authorList>
            <person name="Kim S.K."/>
            <person name="Park H.Y."/>
            <person name="Jang Y.H."/>
            <person name="Lee K.C."/>
            <person name="Chung Y.S."/>
            <person name="Lee J.H."/>
            <person name="Kim J.K."/>
        </authorList>
    </citation>
    <scope>INTERACTION WITH NFYB8; NFYB10 AND HD5/NFYB11</scope>
    <scope>SUBCELLULAR LOCATION</scope>
</reference>
<protein>
    <recommendedName>
        <fullName evidence="7">Nuclear transcription factor Y subunit C-6</fullName>
        <shortName evidence="6">OsNF-YC6</shortName>
    </recommendedName>
    <alternativeName>
        <fullName evidence="7">Transcriptional activator HAP5D</fullName>
        <shortName evidence="5">OsHAP5D</shortName>
    </alternativeName>
</protein>
<name>NFYC6_ORYSJ</name>
<sequence length="205" mass="21909">MEPKSTTPPPPPPPPVLGAPVPYPPAGAYPPPVGPYAHAPPLYAPPPPAAAAASAAATAASQQAAAAQLQNFWAEQYREIEHTTDFKNHNLPLARIKKIMKADEDVRMIAAEAPVVFARACEMFILELTHRGWAHAEENKRRTLQKSDIAAAIARTEVFDFLVDIVPRDEAKDAEAAAAVAAGIPHPAAGLPATDPMAYYYVQPQ</sequence>
<evidence type="ECO:0000250" key="1"/>
<evidence type="ECO:0000256" key="2">
    <source>
        <dbReference type="SAM" id="MobiDB-lite"/>
    </source>
</evidence>
<evidence type="ECO:0000269" key="3">
    <source>
    </source>
</evidence>
<evidence type="ECO:0000269" key="4">
    <source>
    </source>
</evidence>
<evidence type="ECO:0000303" key="5">
    <source>
    </source>
</evidence>
<evidence type="ECO:0000303" key="6">
    <source>
    </source>
</evidence>
<evidence type="ECO:0000305" key="7"/>
<evidence type="ECO:0000312" key="8">
    <source>
        <dbReference type="EMBL" id="BAA81759.1"/>
    </source>
</evidence>
<evidence type="ECO:0000312" key="9">
    <source>
        <dbReference type="EMBL" id="BAD10129.1"/>
    </source>
</evidence>
<evidence type="ECO:0000312" key="10">
    <source>
        <dbReference type="EMBL" id="BAF24050.1"/>
    </source>
</evidence>
<evidence type="ECO:0007829" key="11">
    <source>
        <dbReference type="PDB" id="6R0L"/>
    </source>
</evidence>
<comment type="function">
    <text evidence="1">Component of the NF-Y/HAP transcription factor complex.</text>
</comment>
<comment type="subunit">
    <text evidence="1 3 4">Heterotrimeric transcription factor composed of three components, NF-YA, NF-YB and NF-YC. NF-YB and NF-YC must interact and dimerize for NF-YA association and DNA binding (By similarity). Interacts with NFYB2 (PubMed:18193457). Interacts with NFYB8, NFYB10 and HD5/NFYB11 (PubMed:26542958).</text>
</comment>
<comment type="subcellular location">
    <subcellularLocation>
        <location evidence="4">Nucleus</location>
    </subcellularLocation>
    <subcellularLocation>
        <location evidence="4">Cytoplasm</location>
    </subcellularLocation>
</comment>
<comment type="similarity">
    <text evidence="7">Belongs to the NFYC/HAP5 subunit family.</text>
</comment>
<accession>Q9XE33</accession>